<accession>P03718</accession>
<dbReference type="EMBL" id="X03016">
    <property type="protein sequence ID" value="CAA26803.1"/>
    <property type="molecule type" value="Genomic_DNA"/>
</dbReference>
<dbReference type="EMBL" id="AF158101">
    <property type="protein sequence ID" value="AAD42585.1"/>
    <property type="molecule type" value="Genomic_DNA"/>
</dbReference>
<dbReference type="PIR" id="A92919">
    <property type="entry name" value="HIBP14"/>
</dbReference>
<dbReference type="PIR" id="S48006">
    <property type="entry name" value="S48006"/>
</dbReference>
<dbReference type="RefSeq" id="NP_049749.1">
    <property type="nucleotide sequence ID" value="NC_000866.4"/>
</dbReference>
<dbReference type="PDB" id="2JUB">
    <property type="method" value="NMR"/>
    <property type="chains" value="A=20-95"/>
</dbReference>
<dbReference type="PDBsum" id="2JUB"/>
<dbReference type="BMRB" id="P03718"/>
<dbReference type="SMR" id="P03718"/>
<dbReference type="GeneID" id="1258561"/>
<dbReference type="KEGG" id="vg:1258561"/>
<dbReference type="OrthoDB" id="21188at10239"/>
<dbReference type="EvolutionaryTrace" id="P03718"/>
<dbReference type="Proteomes" id="UP000009087">
    <property type="component" value="Segment"/>
</dbReference>
<dbReference type="GO" id="GO:0032067">
    <property type="term" value="F:type IV site-specific deoxyribonuclease activity"/>
    <property type="evidence" value="ECO:0000315"/>
    <property type="project" value="CACAO"/>
</dbReference>
<dbReference type="FunFam" id="3.30.160.860:FF:000001">
    <property type="entry name" value="IpI internal head protein"/>
    <property type="match status" value="1"/>
</dbReference>
<dbReference type="Gene3D" id="3.30.160.860">
    <property type="match status" value="1"/>
</dbReference>
<dbReference type="Gene3D" id="2.20.25.370">
    <property type="entry name" value="Ipi1, C-terminal domain"/>
    <property type="match status" value="1"/>
</dbReference>
<dbReference type="InterPro" id="IPR024373">
    <property type="entry name" value="Phage_T4_IpI"/>
</dbReference>
<dbReference type="InterPro" id="IPR038569">
    <property type="entry name" value="Phage_T4_IpI_C_sf"/>
</dbReference>
<dbReference type="Pfam" id="PF11634">
    <property type="entry name" value="IPI_T4"/>
    <property type="match status" value="1"/>
</dbReference>
<feature type="propeptide" id="PRO_0000003338">
    <location>
        <begin position="1"/>
        <end position="19"/>
    </location>
</feature>
<feature type="chain" id="PRO_0000003339" description="Internal protein I">
    <location>
        <begin position="20"/>
        <end position="95"/>
    </location>
</feature>
<feature type="site" description="Cleavage; by prohead core protease GP21" evidence="1">
    <location>
        <begin position="19"/>
        <end position="20"/>
    </location>
</feature>
<feature type="helix" evidence="2">
    <location>
        <begin position="22"/>
        <end position="29"/>
    </location>
</feature>
<feature type="strand" evidence="2">
    <location>
        <begin position="31"/>
        <end position="33"/>
    </location>
</feature>
<feature type="strand" evidence="2">
    <location>
        <begin position="35"/>
        <end position="39"/>
    </location>
</feature>
<feature type="turn" evidence="2">
    <location>
        <begin position="41"/>
        <end position="43"/>
    </location>
</feature>
<feature type="strand" evidence="2">
    <location>
        <begin position="46"/>
        <end position="49"/>
    </location>
</feature>
<feature type="turn" evidence="2">
    <location>
        <begin position="53"/>
        <end position="56"/>
    </location>
</feature>
<feature type="strand" evidence="2">
    <location>
        <begin position="58"/>
        <end position="61"/>
    </location>
</feature>
<feature type="strand" evidence="2">
    <location>
        <begin position="63"/>
        <end position="71"/>
    </location>
</feature>
<feature type="strand" evidence="2">
    <location>
        <begin position="75"/>
        <end position="77"/>
    </location>
</feature>
<feature type="strand" evidence="2">
    <location>
        <begin position="80"/>
        <end position="83"/>
    </location>
</feature>
<feature type="helix" evidence="2">
    <location>
        <begin position="84"/>
        <end position="94"/>
    </location>
</feature>
<gene>
    <name type="primary">ipi1</name>
    <name type="synonym">ipi</name>
</gene>
<proteinExistence type="evidence at protein level"/>
<organismHost>
    <name type="scientific">Escherichia coli</name>
    <dbReference type="NCBI Taxonomy" id="562"/>
</organismHost>
<evidence type="ECO:0000269" key="1">
    <source>
    </source>
</evidence>
<evidence type="ECO:0007829" key="2">
    <source>
        <dbReference type="PDB" id="2JUB"/>
    </source>
</evidence>
<organism>
    <name type="scientific">Enterobacteria phage T4</name>
    <name type="common">Bacteriophage T4</name>
    <dbReference type="NCBI Taxonomy" id="10665"/>
    <lineage>
        <taxon>Viruses</taxon>
        <taxon>Duplodnaviria</taxon>
        <taxon>Heunggongvirae</taxon>
        <taxon>Uroviricota</taxon>
        <taxon>Caudoviricetes</taxon>
        <taxon>Straboviridae</taxon>
        <taxon>Tevenvirinae</taxon>
        <taxon>Tequatrovirus</taxon>
    </lineage>
</organism>
<protein>
    <recommendedName>
        <fullName>Internal protein I</fullName>
        <shortName>IpI</shortName>
    </recommendedName>
</protein>
<reference key="1">
    <citation type="journal article" date="1985" name="J. Mol. Biol.">
        <title>Sequence organization and control of transcription in the bacteriophage T4 tRNA region.</title>
        <authorList>
            <person name="Broida J."/>
            <person name="Abelson J."/>
        </authorList>
    </citation>
    <scope>NUCLEOTIDE SEQUENCE [GENOMIC DNA]</scope>
</reference>
<reference key="2">
    <citation type="journal article" date="2003" name="Microbiol. Mol. Biol. Rev.">
        <title>Bacteriophage T4 genome.</title>
        <authorList>
            <person name="Miller E.S."/>
            <person name="Kutter E."/>
            <person name="Mosig G."/>
            <person name="Arisaka F."/>
            <person name="Kunisawa T."/>
            <person name="Ruger W."/>
        </authorList>
    </citation>
    <scope>NUCLEOTIDE SEQUENCE [LARGE SCALE GENOMIC DNA]</scope>
</reference>
<reference key="3">
    <citation type="journal article" date="1977" name="J. Mol. Biol.">
        <title>Complete aimino acid sequence of bacteriophage T4 internal protein I and its cleavage site on virus maturation.</title>
        <authorList>
            <person name="Isobe T."/>
            <person name="Black L.W."/>
            <person name="Tsugita A."/>
        </authorList>
    </citation>
    <scope>PROTEIN SEQUENCE OF 16-95</scope>
</reference>
<sequence>MKTFKEFTSTTTPVSTITEATLTSEVIKANKGREGKPMISLVDGEEIKGTVYLGDGWSAKKDGATIVISPAEETALFKAKHISAAHLKIIAKNLL</sequence>
<name>IPI1_BPT4</name>
<keyword id="KW-0002">3D-structure</keyword>
<keyword id="KW-0903">Direct protein sequencing</keyword>
<keyword id="KW-1185">Reference proteome</keyword>
<comment type="function">
    <text>Internal protein I is one of four proteins in a complex that functions in bacteriophage head maturation.</text>
</comment>